<accession>Q0A8H9</accession>
<feature type="chain" id="PRO_1000003678" description="Nucleoid-associated protein Mlg_1509">
    <location>
        <begin position="1"/>
        <end position="107"/>
    </location>
</feature>
<evidence type="ECO:0000255" key="1">
    <source>
        <dbReference type="HAMAP-Rule" id="MF_00274"/>
    </source>
</evidence>
<reference key="1">
    <citation type="submission" date="2006-08" db="EMBL/GenBank/DDBJ databases">
        <title>Complete sequence of Alkalilimnicola ehrilichei MLHE-1.</title>
        <authorList>
            <person name="Copeland A."/>
            <person name="Lucas S."/>
            <person name="Lapidus A."/>
            <person name="Barry K."/>
            <person name="Detter J.C."/>
            <person name="Glavina del Rio T."/>
            <person name="Hammon N."/>
            <person name="Israni S."/>
            <person name="Dalin E."/>
            <person name="Tice H."/>
            <person name="Pitluck S."/>
            <person name="Sims D."/>
            <person name="Brettin T."/>
            <person name="Bruce D."/>
            <person name="Han C."/>
            <person name="Tapia R."/>
            <person name="Gilna P."/>
            <person name="Schmutz J."/>
            <person name="Larimer F."/>
            <person name="Land M."/>
            <person name="Hauser L."/>
            <person name="Kyrpides N."/>
            <person name="Mikhailova N."/>
            <person name="Oremland R.S."/>
            <person name="Hoeft S.E."/>
            <person name="Switzer-Blum J."/>
            <person name="Kulp T."/>
            <person name="King G."/>
            <person name="Tabita R."/>
            <person name="Witte B."/>
            <person name="Santini J.M."/>
            <person name="Basu P."/>
            <person name="Hollibaugh J.T."/>
            <person name="Xie G."/>
            <person name="Stolz J.F."/>
            <person name="Richardson P."/>
        </authorList>
    </citation>
    <scope>NUCLEOTIDE SEQUENCE [LARGE SCALE GENOMIC DNA]</scope>
    <source>
        <strain>ATCC BAA-1101 / DSM 17681 / MLHE-1</strain>
    </source>
</reference>
<keyword id="KW-0963">Cytoplasm</keyword>
<keyword id="KW-0238">DNA-binding</keyword>
<keyword id="KW-1185">Reference proteome</keyword>
<gene>
    <name type="ordered locus">Mlg_1509</name>
</gene>
<protein>
    <recommendedName>
        <fullName evidence="1">Nucleoid-associated protein Mlg_1509</fullName>
    </recommendedName>
</protein>
<comment type="function">
    <text evidence="1">Binds to DNA and alters its conformation. May be involved in regulation of gene expression, nucleoid organization and DNA protection.</text>
</comment>
<comment type="subunit">
    <text evidence="1">Homodimer.</text>
</comment>
<comment type="subcellular location">
    <subcellularLocation>
        <location evidence="1">Cytoplasm</location>
        <location evidence="1">Nucleoid</location>
    </subcellularLocation>
</comment>
<comment type="similarity">
    <text evidence="1">Belongs to the YbaB/EbfC family.</text>
</comment>
<proteinExistence type="inferred from homology"/>
<name>Y1509_ALKEH</name>
<sequence>MRGGIGNMMKQAQKLQEELKKAQEEIAKMEVTGESGGGMVAVTINGKHEARRVSIDPSLFEDDREMVEDLVAAAFNDAVHKLEQESQQRMAGLSEGMNLPSGFKLPF</sequence>
<dbReference type="EMBL" id="CP000453">
    <property type="protein sequence ID" value="ABI56858.1"/>
    <property type="molecule type" value="Genomic_DNA"/>
</dbReference>
<dbReference type="RefSeq" id="WP_011629253.1">
    <property type="nucleotide sequence ID" value="NC_008340.1"/>
</dbReference>
<dbReference type="SMR" id="Q0A8H9"/>
<dbReference type="KEGG" id="aeh:Mlg_1509"/>
<dbReference type="eggNOG" id="COG0718">
    <property type="taxonomic scope" value="Bacteria"/>
</dbReference>
<dbReference type="HOGENOM" id="CLU_140930_0_0_6"/>
<dbReference type="OrthoDB" id="9808738at2"/>
<dbReference type="Proteomes" id="UP000001962">
    <property type="component" value="Chromosome"/>
</dbReference>
<dbReference type="GO" id="GO:0043590">
    <property type="term" value="C:bacterial nucleoid"/>
    <property type="evidence" value="ECO:0007669"/>
    <property type="project" value="UniProtKB-UniRule"/>
</dbReference>
<dbReference type="GO" id="GO:0005829">
    <property type="term" value="C:cytosol"/>
    <property type="evidence" value="ECO:0007669"/>
    <property type="project" value="TreeGrafter"/>
</dbReference>
<dbReference type="GO" id="GO:0003677">
    <property type="term" value="F:DNA binding"/>
    <property type="evidence" value="ECO:0007669"/>
    <property type="project" value="UniProtKB-UniRule"/>
</dbReference>
<dbReference type="FunFam" id="3.30.1310.10:FF:000001">
    <property type="entry name" value="Nucleoid-associated protein YbaB"/>
    <property type="match status" value="1"/>
</dbReference>
<dbReference type="Gene3D" id="3.30.1310.10">
    <property type="entry name" value="Nucleoid-associated protein YbaB-like domain"/>
    <property type="match status" value="1"/>
</dbReference>
<dbReference type="HAMAP" id="MF_00274">
    <property type="entry name" value="DNA_YbaB_EbfC"/>
    <property type="match status" value="1"/>
</dbReference>
<dbReference type="InterPro" id="IPR036894">
    <property type="entry name" value="YbaB-like_sf"/>
</dbReference>
<dbReference type="InterPro" id="IPR004401">
    <property type="entry name" value="YbaB/EbfC"/>
</dbReference>
<dbReference type="NCBIfam" id="TIGR00103">
    <property type="entry name" value="DNA_YbaB_EbfC"/>
    <property type="match status" value="1"/>
</dbReference>
<dbReference type="PANTHER" id="PTHR33449">
    <property type="entry name" value="NUCLEOID-ASSOCIATED PROTEIN YBAB"/>
    <property type="match status" value="1"/>
</dbReference>
<dbReference type="PANTHER" id="PTHR33449:SF1">
    <property type="entry name" value="NUCLEOID-ASSOCIATED PROTEIN YBAB"/>
    <property type="match status" value="1"/>
</dbReference>
<dbReference type="Pfam" id="PF02575">
    <property type="entry name" value="YbaB_DNA_bd"/>
    <property type="match status" value="1"/>
</dbReference>
<dbReference type="PIRSF" id="PIRSF004555">
    <property type="entry name" value="UCP004555"/>
    <property type="match status" value="1"/>
</dbReference>
<dbReference type="SUPFAM" id="SSF82607">
    <property type="entry name" value="YbaB-like"/>
    <property type="match status" value="1"/>
</dbReference>
<organism>
    <name type="scientific">Alkalilimnicola ehrlichii (strain ATCC BAA-1101 / DSM 17681 / MLHE-1)</name>
    <dbReference type="NCBI Taxonomy" id="187272"/>
    <lineage>
        <taxon>Bacteria</taxon>
        <taxon>Pseudomonadati</taxon>
        <taxon>Pseudomonadota</taxon>
        <taxon>Gammaproteobacteria</taxon>
        <taxon>Chromatiales</taxon>
        <taxon>Ectothiorhodospiraceae</taxon>
        <taxon>Alkalilimnicola</taxon>
    </lineage>
</organism>